<sequence>MATKFPKFSQALAQDPATRRIWYGIATAHDLEAHDGMTEENLYQKIFASHFGHLAVIFLWTAGNLFHVAWQGNFEKWVSNPLKVKPIAHAIWDPHFGESAIKAFSKGNTYPVNIAFSGVYQWWYTIGFRTNQELYLGSVGLLILASVLLFAGWLHLQPKFRPSLAWFKNNESRLNHHLSGLLGVSSLAWTGHIVHVAIPASRGVHVGWENFLTTPPHPAGLTPFYSGDWTVYAANPDSANHVYGTAEGAGTAILTFLGGFHPQTQSLWLSDIAHHQLAIAVVFIVAGHMYRTNFGIGHNMKEILDAHRPPGGRLGAGHTGLFETITNSLHMQLGLALACLGVATSLTAQHMYAITPYAFLSKDFTTEAALYTHHQYIAGFLMVGAFAHGAIFFVRDYDPELNKNNVLARMLEHKEAIISHLSWASLFLGFHTLGLYIHNDTVVAFGQPEKQILFEPLFAEYIQAASGKAVYEFNTLLSSSTSPATVAGNQIWLPGWLEAINNNKNDLFLKIGPGDFLVHHAIALGLHTTTLILVKGALDARGSKLMPDKKDFGYSFPCDGPGRGGTCDISAWDAFYLAMFWMLNTIGWVTFYWHWKHMTIWGGNPGQFDESSNYIMGWLRDYLWLNSSPLINGYNPFGMNNLSVWAWMFLFGHLIWATGFMFLISWRGYWQELIETLVWAHERTPLANLVRWRDKPVALSIVQARLVGLVHFTVGYVLTYAAFVIASTAGKYG</sequence>
<comment type="function">
    <text evidence="1">PsaA and PsaB bind P700, the primary electron donor of photosystem I (PSI), as well as the electron acceptors A0, A1 and FX. PSI is a plastocyanin/cytochrome c6-ferredoxin oxidoreductase, converting photonic excitation into a charge separation, which transfers an electron from the donor P700 chlorophyll pair to the spectroscopically characterized acceptors A0, A1, FX, FA and FB in turn. Oxidized P700 is reduced on the lumenal side of the thylakoid membrane by plastocyanin or cytochrome c6.</text>
</comment>
<comment type="catalytic activity">
    <reaction evidence="1">
        <text>reduced [plastocyanin] + hnu + oxidized [2Fe-2S]-[ferredoxin] = oxidized [plastocyanin] + reduced [2Fe-2S]-[ferredoxin]</text>
        <dbReference type="Rhea" id="RHEA:30407"/>
        <dbReference type="Rhea" id="RHEA-COMP:10000"/>
        <dbReference type="Rhea" id="RHEA-COMP:10001"/>
        <dbReference type="Rhea" id="RHEA-COMP:10039"/>
        <dbReference type="Rhea" id="RHEA-COMP:10040"/>
        <dbReference type="ChEBI" id="CHEBI:29036"/>
        <dbReference type="ChEBI" id="CHEBI:30212"/>
        <dbReference type="ChEBI" id="CHEBI:33737"/>
        <dbReference type="ChEBI" id="CHEBI:33738"/>
        <dbReference type="ChEBI" id="CHEBI:49552"/>
        <dbReference type="EC" id="1.97.1.12"/>
    </reaction>
</comment>
<comment type="cofactor">
    <text evidence="1">P700 is a chlorophyll a/chlorophyll a' dimer, A0 is one or more chlorophyll a, A1 is one or both phylloquinones and FX is a shared 4Fe-4S iron-sulfur center.</text>
</comment>
<comment type="subunit">
    <text evidence="1">The PsaA/B heterodimer binds the P700 chlorophyll special pair and subsequent electron acceptors. PSI consists of a core antenna complex that captures photons, and an electron transfer chain that converts photonic excitation into a charge separation. The eukaryotic PSI reaction center is composed of at least 11 subunits.</text>
</comment>
<comment type="subcellular location">
    <subcellularLocation>
        <location>Plastid</location>
        <location>Chloroplast thylakoid membrane</location>
        <topology>Multi-pass membrane protein</topology>
    </subcellularLocation>
</comment>
<comment type="similarity">
    <text evidence="1">Belongs to the PsaA/PsaB family.</text>
</comment>
<evidence type="ECO:0000255" key="1">
    <source>
        <dbReference type="HAMAP-Rule" id="MF_00482"/>
    </source>
</evidence>
<gene>
    <name evidence="1" type="primary">psaB</name>
</gene>
<feature type="chain" id="PRO_0000277142" description="Photosystem I P700 chlorophyll a apoprotein A2">
    <location>
        <begin position="1"/>
        <end position="733"/>
    </location>
</feature>
<feature type="transmembrane region" description="Helical; Name=I" evidence="1">
    <location>
        <begin position="46"/>
        <end position="69"/>
    </location>
</feature>
<feature type="transmembrane region" description="Helical; Name=II" evidence="1">
    <location>
        <begin position="134"/>
        <end position="157"/>
    </location>
</feature>
<feature type="transmembrane region" description="Helical; Name=III" evidence="1">
    <location>
        <begin position="174"/>
        <end position="198"/>
    </location>
</feature>
<feature type="transmembrane region" description="Helical; Name=IV" evidence="1">
    <location>
        <begin position="272"/>
        <end position="290"/>
    </location>
</feature>
<feature type="transmembrane region" description="Helical; Name=V" evidence="1">
    <location>
        <begin position="329"/>
        <end position="352"/>
    </location>
</feature>
<feature type="transmembrane region" description="Helical; Name=VI" evidence="1">
    <location>
        <begin position="368"/>
        <end position="394"/>
    </location>
</feature>
<feature type="transmembrane region" description="Helical; Name=VII" evidence="1">
    <location>
        <begin position="416"/>
        <end position="438"/>
    </location>
</feature>
<feature type="transmembrane region" description="Helical; Name=VIII" evidence="1">
    <location>
        <begin position="516"/>
        <end position="534"/>
    </location>
</feature>
<feature type="transmembrane region" description="Helical; Name=IX" evidence="1">
    <location>
        <begin position="574"/>
        <end position="595"/>
    </location>
</feature>
<feature type="transmembrane region" description="Helical; Name=X" evidence="1">
    <location>
        <begin position="642"/>
        <end position="664"/>
    </location>
</feature>
<feature type="transmembrane region" description="Helical; Name=XI" evidence="1">
    <location>
        <begin position="706"/>
        <end position="726"/>
    </location>
</feature>
<feature type="binding site" evidence="1">
    <location>
        <position position="558"/>
    </location>
    <ligand>
        <name>[4Fe-4S] cluster</name>
        <dbReference type="ChEBI" id="CHEBI:49883"/>
        <note>ligand shared between dimeric partners</note>
    </ligand>
</feature>
<feature type="binding site" evidence="1">
    <location>
        <position position="567"/>
    </location>
    <ligand>
        <name>[4Fe-4S] cluster</name>
        <dbReference type="ChEBI" id="CHEBI:49883"/>
        <note>ligand shared between dimeric partners</note>
    </ligand>
</feature>
<feature type="binding site" description="axial binding residue" evidence="1">
    <location>
        <position position="653"/>
    </location>
    <ligand>
        <name>chlorophyll a</name>
        <dbReference type="ChEBI" id="CHEBI:58416"/>
        <label>B1</label>
    </ligand>
    <ligandPart>
        <name>Mg</name>
        <dbReference type="ChEBI" id="CHEBI:25107"/>
    </ligandPart>
</feature>
<feature type="binding site" description="axial binding residue" evidence="1">
    <location>
        <position position="661"/>
    </location>
    <ligand>
        <name>chlorophyll a</name>
        <dbReference type="ChEBI" id="CHEBI:58416"/>
        <label>B3</label>
    </ligand>
    <ligandPart>
        <name>Mg</name>
        <dbReference type="ChEBI" id="CHEBI:25107"/>
    </ligandPart>
</feature>
<feature type="binding site" evidence="1">
    <location>
        <position position="669"/>
    </location>
    <ligand>
        <name>chlorophyll a</name>
        <dbReference type="ChEBI" id="CHEBI:58416"/>
        <label>B3</label>
    </ligand>
</feature>
<feature type="binding site" evidence="1">
    <location>
        <position position="670"/>
    </location>
    <ligand>
        <name>phylloquinone</name>
        <dbReference type="ChEBI" id="CHEBI:18067"/>
        <label>B</label>
    </ligand>
</feature>
<dbReference type="EC" id="1.97.1.12" evidence="1"/>
<dbReference type="EMBL" id="EF067920">
    <property type="protein sequence ID" value="ABK20581.1"/>
    <property type="molecule type" value="Genomic_DNA"/>
</dbReference>
<dbReference type="RefSeq" id="YP_874358.1">
    <property type="nucleotide sequence ID" value="NC_008588.1"/>
</dbReference>
<dbReference type="SMR" id="A0T0M7"/>
<dbReference type="STRING" id="556484.A0T0M7"/>
<dbReference type="GeneID" id="4524635"/>
<dbReference type="InParanoid" id="A0T0M7"/>
<dbReference type="Proteomes" id="UP000000759">
    <property type="component" value="Chloroplast"/>
</dbReference>
<dbReference type="GO" id="GO:0009535">
    <property type="term" value="C:chloroplast thylakoid membrane"/>
    <property type="evidence" value="ECO:0007669"/>
    <property type="project" value="UniProtKB-SubCell"/>
</dbReference>
<dbReference type="GO" id="GO:0009522">
    <property type="term" value="C:photosystem I"/>
    <property type="evidence" value="ECO:0007669"/>
    <property type="project" value="UniProtKB-KW"/>
</dbReference>
<dbReference type="GO" id="GO:0051539">
    <property type="term" value="F:4 iron, 4 sulfur cluster binding"/>
    <property type="evidence" value="ECO:0007669"/>
    <property type="project" value="UniProtKB-KW"/>
</dbReference>
<dbReference type="GO" id="GO:0016168">
    <property type="term" value="F:chlorophyll binding"/>
    <property type="evidence" value="ECO:0007669"/>
    <property type="project" value="UniProtKB-KW"/>
</dbReference>
<dbReference type="GO" id="GO:0009055">
    <property type="term" value="F:electron transfer activity"/>
    <property type="evidence" value="ECO:0007669"/>
    <property type="project" value="UniProtKB-UniRule"/>
</dbReference>
<dbReference type="GO" id="GO:0000287">
    <property type="term" value="F:magnesium ion binding"/>
    <property type="evidence" value="ECO:0007669"/>
    <property type="project" value="UniProtKB-UniRule"/>
</dbReference>
<dbReference type="GO" id="GO:0016491">
    <property type="term" value="F:oxidoreductase activity"/>
    <property type="evidence" value="ECO:0007669"/>
    <property type="project" value="UniProtKB-KW"/>
</dbReference>
<dbReference type="GO" id="GO:0015979">
    <property type="term" value="P:photosynthesis"/>
    <property type="evidence" value="ECO:0007669"/>
    <property type="project" value="UniProtKB-UniRule"/>
</dbReference>
<dbReference type="FunFam" id="1.20.1130.10:FF:000001">
    <property type="entry name" value="Photosystem I P700 chlorophyll a apoprotein A2"/>
    <property type="match status" value="1"/>
</dbReference>
<dbReference type="Gene3D" id="1.20.1130.10">
    <property type="entry name" value="Photosystem I PsaA/PsaB"/>
    <property type="match status" value="1"/>
</dbReference>
<dbReference type="HAMAP" id="MF_00482">
    <property type="entry name" value="PSI_PsaB"/>
    <property type="match status" value="1"/>
</dbReference>
<dbReference type="InterPro" id="IPR001280">
    <property type="entry name" value="PSI_PsaA/B"/>
</dbReference>
<dbReference type="InterPro" id="IPR020586">
    <property type="entry name" value="PSI_PsaA/B_CS"/>
</dbReference>
<dbReference type="InterPro" id="IPR036408">
    <property type="entry name" value="PSI_PsaA/B_sf"/>
</dbReference>
<dbReference type="InterPro" id="IPR006244">
    <property type="entry name" value="PSI_PsaB"/>
</dbReference>
<dbReference type="NCBIfam" id="TIGR01336">
    <property type="entry name" value="psaB"/>
    <property type="match status" value="1"/>
</dbReference>
<dbReference type="PANTHER" id="PTHR30128">
    <property type="entry name" value="OUTER MEMBRANE PROTEIN, OMPA-RELATED"/>
    <property type="match status" value="1"/>
</dbReference>
<dbReference type="PANTHER" id="PTHR30128:SF19">
    <property type="entry name" value="PHOTOSYSTEM I P700 CHLOROPHYLL A APOPROTEIN A1-RELATED"/>
    <property type="match status" value="1"/>
</dbReference>
<dbReference type="Pfam" id="PF00223">
    <property type="entry name" value="PsaA_PsaB"/>
    <property type="match status" value="1"/>
</dbReference>
<dbReference type="PIRSF" id="PIRSF002905">
    <property type="entry name" value="PSI_A"/>
    <property type="match status" value="1"/>
</dbReference>
<dbReference type="PRINTS" id="PR00257">
    <property type="entry name" value="PHOTSYSPSAAB"/>
</dbReference>
<dbReference type="SUPFAM" id="SSF81558">
    <property type="entry name" value="Photosystem I subunits PsaA/PsaB"/>
    <property type="match status" value="1"/>
</dbReference>
<dbReference type="PROSITE" id="PS00419">
    <property type="entry name" value="PHOTOSYSTEM_I_PSAAB"/>
    <property type="match status" value="1"/>
</dbReference>
<reference key="1">
    <citation type="journal article" date="2007" name="Mol. Genet. Genomics">
        <title>Chloroplast genomes of the diatoms Phaeodactylum tricornutum and Thalassiosira pseudonana: comparison with other plastid genomes of the red lineage.</title>
        <authorList>
            <person name="Oudot-Le Secq M.-P."/>
            <person name="Grimwood J."/>
            <person name="Shapiro H."/>
            <person name="Armbrust E.V."/>
            <person name="Bowler C."/>
            <person name="Green B.R."/>
        </authorList>
    </citation>
    <scope>NUCLEOTIDE SEQUENCE [LARGE SCALE GENOMIC DNA]</scope>
    <source>
        <strain>CCAP 1055/1</strain>
    </source>
</reference>
<accession>A0T0M7</accession>
<proteinExistence type="inferred from homology"/>
<geneLocation type="chloroplast"/>
<protein>
    <recommendedName>
        <fullName evidence="1">Photosystem I P700 chlorophyll a apoprotein A2</fullName>
        <ecNumber evidence="1">1.97.1.12</ecNumber>
    </recommendedName>
    <alternativeName>
        <fullName evidence="1">PSI-B</fullName>
    </alternativeName>
    <alternativeName>
        <fullName evidence="1">PsaB</fullName>
    </alternativeName>
</protein>
<organism>
    <name type="scientific">Phaeodactylum tricornutum (strain CCAP 1055/1)</name>
    <dbReference type="NCBI Taxonomy" id="556484"/>
    <lineage>
        <taxon>Eukaryota</taxon>
        <taxon>Sar</taxon>
        <taxon>Stramenopiles</taxon>
        <taxon>Ochrophyta</taxon>
        <taxon>Bacillariophyta</taxon>
        <taxon>Bacillariophyceae</taxon>
        <taxon>Bacillariophycidae</taxon>
        <taxon>Naviculales</taxon>
        <taxon>Phaeodactylaceae</taxon>
        <taxon>Phaeodactylum</taxon>
    </lineage>
</organism>
<keyword id="KW-0004">4Fe-4S</keyword>
<keyword id="KW-0148">Chlorophyll</keyword>
<keyword id="KW-0150">Chloroplast</keyword>
<keyword id="KW-0157">Chromophore</keyword>
<keyword id="KW-0249">Electron transport</keyword>
<keyword id="KW-0408">Iron</keyword>
<keyword id="KW-0411">Iron-sulfur</keyword>
<keyword id="KW-0460">Magnesium</keyword>
<keyword id="KW-0472">Membrane</keyword>
<keyword id="KW-0479">Metal-binding</keyword>
<keyword id="KW-0560">Oxidoreductase</keyword>
<keyword id="KW-0602">Photosynthesis</keyword>
<keyword id="KW-0603">Photosystem I</keyword>
<keyword id="KW-0934">Plastid</keyword>
<keyword id="KW-1185">Reference proteome</keyword>
<keyword id="KW-0793">Thylakoid</keyword>
<keyword id="KW-0812">Transmembrane</keyword>
<keyword id="KW-1133">Transmembrane helix</keyword>
<keyword id="KW-0813">Transport</keyword>
<name>PSAB_PHATC</name>